<organism>
    <name type="scientific">Lactiplantibacillus plantarum</name>
    <name type="common">Lactobacillus plantarum</name>
    <dbReference type="NCBI Taxonomy" id="1590"/>
    <lineage>
        <taxon>Bacteria</taxon>
        <taxon>Bacillati</taxon>
        <taxon>Bacillota</taxon>
        <taxon>Bacilli</taxon>
        <taxon>Lactobacillales</taxon>
        <taxon>Lactobacillaceae</taxon>
        <taxon>Lactiplantibacillus</taxon>
    </lineage>
</organism>
<name>PASM1_LACPN</name>
<evidence type="ECO:0000269" key="1">
    <source>
    </source>
</evidence>
<evidence type="ECO:0000303" key="2">
    <source>
    </source>
</evidence>
<evidence type="ECO:0000305" key="3"/>
<evidence type="ECO:0000312" key="4">
    <source>
        <dbReference type="EMBL" id="BAH98036.1"/>
    </source>
</evidence>
<evidence type="ECO:0007829" key="5">
    <source>
        <dbReference type="PDB" id="2MVI"/>
    </source>
</evidence>
<feature type="signal peptide" evidence="1">
    <location>
        <begin position="1"/>
        <end position="21"/>
    </location>
</feature>
<feature type="chain" id="PRO_0000394801" description="Bacteriocin plantaricin ASM1" evidence="1">
    <location>
        <begin position="22"/>
        <end position="64"/>
    </location>
</feature>
<feature type="cross-link" description="Lanthionine (Ser-Cys)" evidence="1">
    <location>
        <begin position="61"/>
        <end position="64"/>
    </location>
</feature>
<feature type="turn" evidence="5">
    <location>
        <begin position="33"/>
        <end position="36"/>
    </location>
</feature>
<feature type="strand" evidence="5">
    <location>
        <begin position="37"/>
        <end position="40"/>
    </location>
</feature>
<feature type="turn" evidence="5">
    <location>
        <begin position="45"/>
        <end position="49"/>
    </location>
</feature>
<dbReference type="EMBL" id="AB474371">
    <property type="protein sequence ID" value="BAH98036.1"/>
    <property type="molecule type" value="Genomic_DNA"/>
</dbReference>
<dbReference type="RefSeq" id="WP_172687983.1">
    <property type="nucleotide sequence ID" value="NZ_KU896918.1"/>
</dbReference>
<dbReference type="PDB" id="2MVI">
    <property type="method" value="NMR"/>
    <property type="chains" value="A=22-64"/>
</dbReference>
<dbReference type="PDBsum" id="2MVI"/>
<dbReference type="BMRB" id="C7G1H4"/>
<dbReference type="SMR" id="C7G1H4"/>
<dbReference type="TCDB" id="1.C.136.1.1">
    <property type="family name" value="the plantaricin asm1 bacteriocin (pab) family"/>
</dbReference>
<dbReference type="EvolutionaryTrace" id="C7G1H4"/>
<dbReference type="GO" id="GO:0005576">
    <property type="term" value="C:extracellular region"/>
    <property type="evidence" value="ECO:0000314"/>
    <property type="project" value="UniProtKB"/>
</dbReference>
<dbReference type="GO" id="GO:0050830">
    <property type="term" value="P:defense response to Gram-positive bacterium"/>
    <property type="evidence" value="ECO:0000314"/>
    <property type="project" value="UniProtKB"/>
</dbReference>
<dbReference type="GO" id="GO:0031640">
    <property type="term" value="P:killing of cells of another organism"/>
    <property type="evidence" value="ECO:0007669"/>
    <property type="project" value="UniProtKB-KW"/>
</dbReference>
<dbReference type="Gene3D" id="6.10.140.1280">
    <property type="match status" value="1"/>
</dbReference>
<dbReference type="NCBIfam" id="NF033417">
    <property type="entry name" value="glycocin_F_RiPP"/>
    <property type="match status" value="1"/>
</dbReference>
<sequence>MSKLVKTLTVDEISKIQTNGGKPAWCWYTLAMCGAGYDSGTCDYMYSHCFGVKHSSGGGGSYHC</sequence>
<reference evidence="3 4" key="1">
    <citation type="journal article" date="2010" name="Int. J. Food Microbiol.">
        <title>Isolation and characterization of plantaricin ASM1: a new bacteriocin produced by Lactobacillus plantarum A-1.</title>
        <authorList>
            <person name="Hata T."/>
            <person name="Tanaka R."/>
            <person name="Ohmomo S."/>
        </authorList>
    </citation>
    <scope>NUCLEOTIDE SEQUENCE [GENOMIC DNA]</scope>
    <scope>PROTEIN SEQUENCE OF 22-63</scope>
    <scope>FUNCTION</scope>
    <scope>BIOPHYSICOCHEMICAL PROPERTIES</scope>
    <scope>SUBCELLULAR LOCATION</scope>
    <scope>DISULFIDE BONDS</scope>
    <scope>MASS SPECTROMETRY</scope>
    <source>
        <strain evidence="2">A-1</strain>
    </source>
</reference>
<proteinExistence type="evidence at protein level"/>
<protein>
    <recommendedName>
        <fullName evidence="2">Bacteriocin plantaricin ASM1</fullName>
    </recommendedName>
</protein>
<accession>C7G1H4</accession>
<gene>
    <name evidence="4" type="primary">bactA1</name>
</gene>
<keyword id="KW-0002">3D-structure</keyword>
<keyword id="KW-0044">Antibiotic</keyword>
<keyword id="KW-0929">Antimicrobial</keyword>
<keyword id="KW-0078">Bacteriocin</keyword>
<keyword id="KW-0903">Direct protein sequencing</keyword>
<keyword id="KW-1015">Disulfide bond</keyword>
<keyword id="KW-0964">Secreted</keyword>
<keyword id="KW-0732">Signal</keyword>
<keyword id="KW-0883">Thioether bond</keyword>
<comment type="function">
    <text evidence="1">Bacteriocin with a narrow antibacterial spectrum. Antibacterial activity against the Gram-positive bacteria L.plantarun, L.pentosus, L.curvatus, L.lindneri, L.mesenteroides and E.faecilis. Lacks antibacterial activity against the Gram-positive bacteria L.brevis, L.sakei, L.lactis, P.acidilactici, B.subtilis, B.cereus, L.monocytogenes and S.aureus, and against the Gram-negative bacteria E.coli and S.typhimurium.</text>
</comment>
<comment type="biophysicochemical properties">
    <phDependence>
        <text evidence="1">Stable from pH 5.5-8.5.</text>
    </phDependence>
    <temperatureDependence>
        <text evidence="1">Thermostable, activity is retained after incubation at 90 degrees Celsius for 15 minutes.</text>
    </temperatureDependence>
</comment>
<comment type="subcellular location">
    <subcellularLocation>
        <location evidence="1">Secreted</location>
    </subcellularLocation>
</comment>
<comment type="PTM">
    <text evidence="3">Contains 2 disulfide bonds.</text>
</comment>
<comment type="mass spectrometry"/>